<sequence>MSTAALVEGKIVQCIGAVIDVEFPRESMPKIYDALILDGSELTLEVQQQLGDGVVRTICLGASDGLRRGLTVKNTAKPISVPVGKPTLGRIMDVLGRPIDEAGPIESEHTRSIHQKAPAFDELSPSTELLETGIKVIDLICPFAKGGKVGLFGGAGVGKTVNMMELINNIAKEHGGYSVFAGVGERTREGNDFYHEMKDSNVLDKVALVYGQMNEPPGNRLRVALTGLTMAEHFRDEGLDVLFFVDNIYRFTLAGTEVSALLGRMPSAVGYQPTLAEEMGKLQERITSTKKGSITSVQAVYVPADDLTDPSPATTFGHLDATVVLSRDIASLGIYPAVDPLDSTSRQIDPNVIGEEHYSITRRVQQTLQRYKELRDIIAILGMDELSPEDKLSVARARKIQRFLSQPFHVAEVFTGSPGKYVPLKETIRGFKMIVDGECDHLPEQAFYMVGTIDEAFEKAKKIS</sequence>
<gene>
    <name evidence="1" type="primary">atpD</name>
    <name type="ordered locus">BamMC406_0106</name>
</gene>
<organism>
    <name type="scientific">Burkholderia ambifaria (strain MC40-6)</name>
    <dbReference type="NCBI Taxonomy" id="398577"/>
    <lineage>
        <taxon>Bacteria</taxon>
        <taxon>Pseudomonadati</taxon>
        <taxon>Pseudomonadota</taxon>
        <taxon>Betaproteobacteria</taxon>
        <taxon>Burkholderiales</taxon>
        <taxon>Burkholderiaceae</taxon>
        <taxon>Burkholderia</taxon>
        <taxon>Burkholderia cepacia complex</taxon>
    </lineage>
</organism>
<reference key="1">
    <citation type="submission" date="2008-04" db="EMBL/GenBank/DDBJ databases">
        <title>Complete sequence of chromosome 1 of Burkholderia ambifaria MC40-6.</title>
        <authorList>
            <person name="Copeland A."/>
            <person name="Lucas S."/>
            <person name="Lapidus A."/>
            <person name="Glavina del Rio T."/>
            <person name="Dalin E."/>
            <person name="Tice H."/>
            <person name="Pitluck S."/>
            <person name="Chain P."/>
            <person name="Malfatti S."/>
            <person name="Shin M."/>
            <person name="Vergez L."/>
            <person name="Lang D."/>
            <person name="Schmutz J."/>
            <person name="Larimer F."/>
            <person name="Land M."/>
            <person name="Hauser L."/>
            <person name="Kyrpides N."/>
            <person name="Lykidis A."/>
            <person name="Ramette A."/>
            <person name="Konstantinidis K."/>
            <person name="Tiedje J."/>
            <person name="Richardson P."/>
        </authorList>
    </citation>
    <scope>NUCLEOTIDE SEQUENCE [LARGE SCALE GENOMIC DNA]</scope>
    <source>
        <strain>MC40-6</strain>
    </source>
</reference>
<evidence type="ECO:0000255" key="1">
    <source>
        <dbReference type="HAMAP-Rule" id="MF_01347"/>
    </source>
</evidence>
<comment type="function">
    <text evidence="1">Produces ATP from ADP in the presence of a proton gradient across the membrane. The catalytic sites are hosted primarily by the beta subunits.</text>
</comment>
<comment type="catalytic activity">
    <reaction evidence="1">
        <text>ATP + H2O + 4 H(+)(in) = ADP + phosphate + 5 H(+)(out)</text>
        <dbReference type="Rhea" id="RHEA:57720"/>
        <dbReference type="ChEBI" id="CHEBI:15377"/>
        <dbReference type="ChEBI" id="CHEBI:15378"/>
        <dbReference type="ChEBI" id="CHEBI:30616"/>
        <dbReference type="ChEBI" id="CHEBI:43474"/>
        <dbReference type="ChEBI" id="CHEBI:456216"/>
        <dbReference type="EC" id="7.1.2.2"/>
    </reaction>
</comment>
<comment type="subunit">
    <text evidence="1">F-type ATPases have 2 components, CF(1) - the catalytic core - and CF(0) - the membrane proton channel. CF(1) has five subunits: alpha(3), beta(3), gamma(1), delta(1), epsilon(1). CF(0) has three main subunits: a(1), b(2) and c(9-12). The alpha and beta chains form an alternating ring which encloses part of the gamma chain. CF(1) is attached to CF(0) by a central stalk formed by the gamma and epsilon chains, while a peripheral stalk is formed by the delta and b chains.</text>
</comment>
<comment type="subcellular location">
    <subcellularLocation>
        <location evidence="1">Cell inner membrane</location>
        <topology evidence="1">Peripheral membrane protein</topology>
    </subcellularLocation>
</comment>
<comment type="similarity">
    <text evidence="1">Belongs to the ATPase alpha/beta chains family.</text>
</comment>
<proteinExistence type="inferred from homology"/>
<accession>B1YQL4</accession>
<feature type="chain" id="PRO_1000143479" description="ATP synthase subunit beta">
    <location>
        <begin position="1"/>
        <end position="464"/>
    </location>
</feature>
<feature type="binding site" evidence="1">
    <location>
        <begin position="153"/>
        <end position="160"/>
    </location>
    <ligand>
        <name>ATP</name>
        <dbReference type="ChEBI" id="CHEBI:30616"/>
    </ligand>
</feature>
<dbReference type="EC" id="7.1.2.2" evidence="1"/>
<dbReference type="EMBL" id="CP001025">
    <property type="protein sequence ID" value="ACB62608.1"/>
    <property type="molecule type" value="Genomic_DNA"/>
</dbReference>
<dbReference type="RefSeq" id="WP_012362765.1">
    <property type="nucleotide sequence ID" value="NC_010551.1"/>
</dbReference>
<dbReference type="SMR" id="B1YQL4"/>
<dbReference type="KEGG" id="bac:BamMC406_0106"/>
<dbReference type="HOGENOM" id="CLU_022398_0_2_4"/>
<dbReference type="OrthoDB" id="9801639at2"/>
<dbReference type="Proteomes" id="UP000001680">
    <property type="component" value="Chromosome 1"/>
</dbReference>
<dbReference type="GO" id="GO:0005886">
    <property type="term" value="C:plasma membrane"/>
    <property type="evidence" value="ECO:0007669"/>
    <property type="project" value="UniProtKB-SubCell"/>
</dbReference>
<dbReference type="GO" id="GO:0045259">
    <property type="term" value="C:proton-transporting ATP synthase complex"/>
    <property type="evidence" value="ECO:0007669"/>
    <property type="project" value="UniProtKB-KW"/>
</dbReference>
<dbReference type="GO" id="GO:0005524">
    <property type="term" value="F:ATP binding"/>
    <property type="evidence" value="ECO:0007669"/>
    <property type="project" value="UniProtKB-UniRule"/>
</dbReference>
<dbReference type="GO" id="GO:0016887">
    <property type="term" value="F:ATP hydrolysis activity"/>
    <property type="evidence" value="ECO:0007669"/>
    <property type="project" value="InterPro"/>
</dbReference>
<dbReference type="GO" id="GO:0046933">
    <property type="term" value="F:proton-transporting ATP synthase activity, rotational mechanism"/>
    <property type="evidence" value="ECO:0007669"/>
    <property type="project" value="UniProtKB-UniRule"/>
</dbReference>
<dbReference type="CDD" id="cd18110">
    <property type="entry name" value="ATP-synt_F1_beta_C"/>
    <property type="match status" value="1"/>
</dbReference>
<dbReference type="CDD" id="cd18115">
    <property type="entry name" value="ATP-synt_F1_beta_N"/>
    <property type="match status" value="1"/>
</dbReference>
<dbReference type="CDD" id="cd01133">
    <property type="entry name" value="F1-ATPase_beta_CD"/>
    <property type="match status" value="1"/>
</dbReference>
<dbReference type="FunFam" id="1.10.1140.10:FF:000001">
    <property type="entry name" value="ATP synthase subunit beta"/>
    <property type="match status" value="1"/>
</dbReference>
<dbReference type="FunFam" id="3.40.50.300:FF:000004">
    <property type="entry name" value="ATP synthase subunit beta"/>
    <property type="match status" value="1"/>
</dbReference>
<dbReference type="Gene3D" id="2.40.10.170">
    <property type="match status" value="1"/>
</dbReference>
<dbReference type="Gene3D" id="1.10.1140.10">
    <property type="entry name" value="Bovine Mitochondrial F1-atpase, Atp Synthase Beta Chain, Chain D, domain 3"/>
    <property type="match status" value="1"/>
</dbReference>
<dbReference type="Gene3D" id="3.40.50.300">
    <property type="entry name" value="P-loop containing nucleotide triphosphate hydrolases"/>
    <property type="match status" value="1"/>
</dbReference>
<dbReference type="HAMAP" id="MF_01347">
    <property type="entry name" value="ATP_synth_beta_bact"/>
    <property type="match status" value="1"/>
</dbReference>
<dbReference type="InterPro" id="IPR003593">
    <property type="entry name" value="AAA+_ATPase"/>
</dbReference>
<dbReference type="InterPro" id="IPR055190">
    <property type="entry name" value="ATP-synt_VA_C"/>
</dbReference>
<dbReference type="InterPro" id="IPR005722">
    <property type="entry name" value="ATP_synth_F1_bsu"/>
</dbReference>
<dbReference type="InterPro" id="IPR020003">
    <property type="entry name" value="ATPase_a/bsu_AS"/>
</dbReference>
<dbReference type="InterPro" id="IPR050053">
    <property type="entry name" value="ATPase_alpha/beta_chains"/>
</dbReference>
<dbReference type="InterPro" id="IPR004100">
    <property type="entry name" value="ATPase_F1/V1/A1_a/bsu_N"/>
</dbReference>
<dbReference type="InterPro" id="IPR036121">
    <property type="entry name" value="ATPase_F1/V1/A1_a/bsu_N_sf"/>
</dbReference>
<dbReference type="InterPro" id="IPR000194">
    <property type="entry name" value="ATPase_F1/V1/A1_a/bsu_nucl-bd"/>
</dbReference>
<dbReference type="InterPro" id="IPR024034">
    <property type="entry name" value="ATPase_F1/V1_b/a_C"/>
</dbReference>
<dbReference type="InterPro" id="IPR027417">
    <property type="entry name" value="P-loop_NTPase"/>
</dbReference>
<dbReference type="NCBIfam" id="TIGR01039">
    <property type="entry name" value="atpD"/>
    <property type="match status" value="1"/>
</dbReference>
<dbReference type="PANTHER" id="PTHR15184">
    <property type="entry name" value="ATP SYNTHASE"/>
    <property type="match status" value="1"/>
</dbReference>
<dbReference type="PANTHER" id="PTHR15184:SF71">
    <property type="entry name" value="ATP SYNTHASE SUBUNIT BETA, MITOCHONDRIAL"/>
    <property type="match status" value="1"/>
</dbReference>
<dbReference type="Pfam" id="PF00006">
    <property type="entry name" value="ATP-synt_ab"/>
    <property type="match status" value="1"/>
</dbReference>
<dbReference type="Pfam" id="PF02874">
    <property type="entry name" value="ATP-synt_ab_N"/>
    <property type="match status" value="1"/>
</dbReference>
<dbReference type="Pfam" id="PF22919">
    <property type="entry name" value="ATP-synt_VA_C"/>
    <property type="match status" value="1"/>
</dbReference>
<dbReference type="SMART" id="SM00382">
    <property type="entry name" value="AAA"/>
    <property type="match status" value="1"/>
</dbReference>
<dbReference type="SUPFAM" id="SSF47917">
    <property type="entry name" value="C-terminal domain of alpha and beta subunits of F1 ATP synthase"/>
    <property type="match status" value="1"/>
</dbReference>
<dbReference type="SUPFAM" id="SSF50615">
    <property type="entry name" value="N-terminal domain of alpha and beta subunits of F1 ATP synthase"/>
    <property type="match status" value="1"/>
</dbReference>
<dbReference type="SUPFAM" id="SSF52540">
    <property type="entry name" value="P-loop containing nucleoside triphosphate hydrolases"/>
    <property type="match status" value="1"/>
</dbReference>
<dbReference type="PROSITE" id="PS00152">
    <property type="entry name" value="ATPASE_ALPHA_BETA"/>
    <property type="match status" value="1"/>
</dbReference>
<name>ATPB_BURA4</name>
<keyword id="KW-0066">ATP synthesis</keyword>
<keyword id="KW-0067">ATP-binding</keyword>
<keyword id="KW-0997">Cell inner membrane</keyword>
<keyword id="KW-1003">Cell membrane</keyword>
<keyword id="KW-0139">CF(1)</keyword>
<keyword id="KW-0375">Hydrogen ion transport</keyword>
<keyword id="KW-0406">Ion transport</keyword>
<keyword id="KW-0472">Membrane</keyword>
<keyword id="KW-0547">Nucleotide-binding</keyword>
<keyword id="KW-1278">Translocase</keyword>
<keyword id="KW-0813">Transport</keyword>
<protein>
    <recommendedName>
        <fullName evidence="1">ATP synthase subunit beta</fullName>
        <ecNumber evidence="1">7.1.2.2</ecNumber>
    </recommendedName>
    <alternativeName>
        <fullName evidence="1">ATP synthase F1 sector subunit beta</fullName>
    </alternativeName>
    <alternativeName>
        <fullName evidence="1">F-ATPase subunit beta</fullName>
    </alternativeName>
</protein>